<proteinExistence type="inferred from homology"/>
<comment type="function">
    <text evidence="1">Catalyzes the ATP-dependent amination of UTP to CTP with either L-glutamine or ammonia as the source of nitrogen. Regulates intracellular CTP levels through interactions with the four ribonucleotide triphosphates.</text>
</comment>
<comment type="catalytic activity">
    <reaction evidence="1">
        <text>UTP + L-glutamine + ATP + H2O = CTP + L-glutamate + ADP + phosphate + 2 H(+)</text>
        <dbReference type="Rhea" id="RHEA:26426"/>
        <dbReference type="ChEBI" id="CHEBI:15377"/>
        <dbReference type="ChEBI" id="CHEBI:15378"/>
        <dbReference type="ChEBI" id="CHEBI:29985"/>
        <dbReference type="ChEBI" id="CHEBI:30616"/>
        <dbReference type="ChEBI" id="CHEBI:37563"/>
        <dbReference type="ChEBI" id="CHEBI:43474"/>
        <dbReference type="ChEBI" id="CHEBI:46398"/>
        <dbReference type="ChEBI" id="CHEBI:58359"/>
        <dbReference type="ChEBI" id="CHEBI:456216"/>
        <dbReference type="EC" id="6.3.4.2"/>
    </reaction>
</comment>
<comment type="catalytic activity">
    <reaction evidence="1">
        <text>L-glutamine + H2O = L-glutamate + NH4(+)</text>
        <dbReference type="Rhea" id="RHEA:15889"/>
        <dbReference type="ChEBI" id="CHEBI:15377"/>
        <dbReference type="ChEBI" id="CHEBI:28938"/>
        <dbReference type="ChEBI" id="CHEBI:29985"/>
        <dbReference type="ChEBI" id="CHEBI:58359"/>
    </reaction>
</comment>
<comment type="catalytic activity">
    <reaction evidence="1">
        <text>UTP + NH4(+) + ATP = CTP + ADP + phosphate + 2 H(+)</text>
        <dbReference type="Rhea" id="RHEA:16597"/>
        <dbReference type="ChEBI" id="CHEBI:15378"/>
        <dbReference type="ChEBI" id="CHEBI:28938"/>
        <dbReference type="ChEBI" id="CHEBI:30616"/>
        <dbReference type="ChEBI" id="CHEBI:37563"/>
        <dbReference type="ChEBI" id="CHEBI:43474"/>
        <dbReference type="ChEBI" id="CHEBI:46398"/>
        <dbReference type="ChEBI" id="CHEBI:456216"/>
    </reaction>
</comment>
<comment type="activity regulation">
    <text evidence="1">Allosterically activated by GTP, when glutamine is the substrate; GTP has no effect on the reaction when ammonia is the substrate. The allosteric effector GTP functions by stabilizing the protein conformation that binds the tetrahedral intermediate(s) formed during glutamine hydrolysis. Inhibited by the product CTP, via allosteric rather than competitive inhibition.</text>
</comment>
<comment type="pathway">
    <text evidence="1">Pyrimidine metabolism; CTP biosynthesis via de novo pathway; CTP from UDP: step 2/2.</text>
</comment>
<comment type="subunit">
    <text evidence="1">Homotetramer.</text>
</comment>
<comment type="miscellaneous">
    <text evidence="1">CTPSs have evolved a hybrid strategy for distinguishing between UTP and CTP. The overlapping regions of the product feedback inhibitory and substrate sites recognize a common feature in both compounds, the triphosphate moiety. To differentiate isosteric substrate and product pyrimidine rings, an additional pocket far from the expected kinase/ligase catalytic site, specifically recognizes the cytosine and ribose portions of the product inhibitor.</text>
</comment>
<comment type="similarity">
    <text evidence="1">Belongs to the CTP synthase family.</text>
</comment>
<sequence>MTKFVFVTGGVVSSIGKGIVAASLGRLLKSRNYTVSILKLDPYINVDPGTMSPYQHGEVFVTDDGAETDLDLGHYERFTDTNMSKLNNVTTGAIYQAVIHKERRGDYQGSTVQVIPHVTQEIKERIRRVARETNPDVVLVEVGGTVGDIESLPFLEAIRQFRKDVGRANVAYVHVTLVPLIKAAGEMKTKPTQHSVKELRSIGIQPDVLVCRCEQPLPRGIKEKISEFCDVPVECVIQAQDAPSIYDVPLVLEQEGLAQRVLEILNLDPQQPDLREWELLVQRLHHPQEQVEIAIVGKYVRLTDAYLSVAEALRHAGLALNAGVTLRWISSEEIEERGPEALLSGVDGVVVPGGFGNRGIEGKVASICYVRERGIPFLGLCLGMQCAVIDWGCHIAQLERANSYEFDPDTPHPVISLLPEQKDVEDLGGTLRLGLYPCRIMPNTLAAKLYGEAIIYERHRHRYEFNNAYRSLFLDSGYVISGVSPDNRLVEIIELPSHPFFIATQFHPEFRSRPNRPHPLFLGLIEAALRSRPQPRPLQLQKMG</sequence>
<gene>
    <name evidence="1" type="primary">pyrG</name>
    <name type="ordered locus">CYB_1478</name>
</gene>
<reference key="1">
    <citation type="journal article" date="2007" name="ISME J.">
        <title>Population level functional diversity in a microbial community revealed by comparative genomic and metagenomic analyses.</title>
        <authorList>
            <person name="Bhaya D."/>
            <person name="Grossman A.R."/>
            <person name="Steunou A.-S."/>
            <person name="Khuri N."/>
            <person name="Cohan F.M."/>
            <person name="Hamamura N."/>
            <person name="Melendrez M.C."/>
            <person name="Bateson M.M."/>
            <person name="Ward D.M."/>
            <person name="Heidelberg J.F."/>
        </authorList>
    </citation>
    <scope>NUCLEOTIDE SEQUENCE [LARGE SCALE GENOMIC DNA]</scope>
    <source>
        <strain>JA-2-3B'a(2-13)</strain>
    </source>
</reference>
<feature type="chain" id="PRO_0000266244" description="CTP synthase">
    <location>
        <begin position="1"/>
        <end position="544"/>
    </location>
</feature>
<feature type="domain" description="Glutamine amidotransferase type-1" evidence="1">
    <location>
        <begin position="292"/>
        <end position="534"/>
    </location>
</feature>
<feature type="region of interest" description="Amidoligase domain" evidence="1">
    <location>
        <begin position="1"/>
        <end position="267"/>
    </location>
</feature>
<feature type="active site" description="Nucleophile; for glutamine hydrolysis" evidence="1">
    <location>
        <position position="381"/>
    </location>
</feature>
<feature type="active site" evidence="1">
    <location>
        <position position="507"/>
    </location>
</feature>
<feature type="active site" evidence="1">
    <location>
        <position position="509"/>
    </location>
</feature>
<feature type="binding site" evidence="1">
    <location>
        <position position="13"/>
    </location>
    <ligand>
        <name>CTP</name>
        <dbReference type="ChEBI" id="CHEBI:37563"/>
        <note>allosteric inhibitor</note>
    </ligand>
</feature>
<feature type="binding site" evidence="1">
    <location>
        <position position="13"/>
    </location>
    <ligand>
        <name>UTP</name>
        <dbReference type="ChEBI" id="CHEBI:46398"/>
    </ligand>
</feature>
<feature type="binding site" evidence="1">
    <location>
        <begin position="14"/>
        <end position="19"/>
    </location>
    <ligand>
        <name>ATP</name>
        <dbReference type="ChEBI" id="CHEBI:30616"/>
    </ligand>
</feature>
<feature type="binding site" evidence="1">
    <location>
        <position position="54"/>
    </location>
    <ligand>
        <name>L-glutamine</name>
        <dbReference type="ChEBI" id="CHEBI:58359"/>
    </ligand>
</feature>
<feature type="binding site" evidence="1">
    <location>
        <position position="71"/>
    </location>
    <ligand>
        <name>ATP</name>
        <dbReference type="ChEBI" id="CHEBI:30616"/>
    </ligand>
</feature>
<feature type="binding site" evidence="1">
    <location>
        <position position="71"/>
    </location>
    <ligand>
        <name>Mg(2+)</name>
        <dbReference type="ChEBI" id="CHEBI:18420"/>
    </ligand>
</feature>
<feature type="binding site" evidence="1">
    <location>
        <position position="141"/>
    </location>
    <ligand>
        <name>Mg(2+)</name>
        <dbReference type="ChEBI" id="CHEBI:18420"/>
    </ligand>
</feature>
<feature type="binding site" evidence="1">
    <location>
        <begin position="148"/>
        <end position="150"/>
    </location>
    <ligand>
        <name>CTP</name>
        <dbReference type="ChEBI" id="CHEBI:37563"/>
        <note>allosteric inhibitor</note>
    </ligand>
</feature>
<feature type="binding site" evidence="1">
    <location>
        <begin position="188"/>
        <end position="193"/>
    </location>
    <ligand>
        <name>CTP</name>
        <dbReference type="ChEBI" id="CHEBI:37563"/>
        <note>allosteric inhibitor</note>
    </ligand>
</feature>
<feature type="binding site" evidence="1">
    <location>
        <begin position="188"/>
        <end position="193"/>
    </location>
    <ligand>
        <name>UTP</name>
        <dbReference type="ChEBI" id="CHEBI:46398"/>
    </ligand>
</feature>
<feature type="binding site" evidence="1">
    <location>
        <position position="224"/>
    </location>
    <ligand>
        <name>CTP</name>
        <dbReference type="ChEBI" id="CHEBI:37563"/>
        <note>allosteric inhibitor</note>
    </ligand>
</feature>
<feature type="binding site" evidence="1">
    <location>
        <position position="224"/>
    </location>
    <ligand>
        <name>UTP</name>
        <dbReference type="ChEBI" id="CHEBI:46398"/>
    </ligand>
</feature>
<feature type="binding site" evidence="1">
    <location>
        <position position="354"/>
    </location>
    <ligand>
        <name>L-glutamine</name>
        <dbReference type="ChEBI" id="CHEBI:58359"/>
    </ligand>
</feature>
<feature type="binding site" evidence="1">
    <location>
        <begin position="382"/>
        <end position="385"/>
    </location>
    <ligand>
        <name>L-glutamine</name>
        <dbReference type="ChEBI" id="CHEBI:58359"/>
    </ligand>
</feature>
<feature type="binding site" evidence="1">
    <location>
        <position position="405"/>
    </location>
    <ligand>
        <name>L-glutamine</name>
        <dbReference type="ChEBI" id="CHEBI:58359"/>
    </ligand>
</feature>
<feature type="binding site" evidence="1">
    <location>
        <position position="462"/>
    </location>
    <ligand>
        <name>L-glutamine</name>
        <dbReference type="ChEBI" id="CHEBI:58359"/>
    </ligand>
</feature>
<organism>
    <name type="scientific">Synechococcus sp. (strain JA-2-3B'a(2-13))</name>
    <name type="common">Cyanobacteria bacterium Yellowstone B-Prime</name>
    <dbReference type="NCBI Taxonomy" id="321332"/>
    <lineage>
        <taxon>Bacteria</taxon>
        <taxon>Bacillati</taxon>
        <taxon>Cyanobacteriota</taxon>
        <taxon>Cyanophyceae</taxon>
        <taxon>Synechococcales</taxon>
        <taxon>Synechococcaceae</taxon>
        <taxon>Synechococcus</taxon>
    </lineage>
</organism>
<accession>Q2JLG7</accession>
<protein>
    <recommendedName>
        <fullName evidence="1">CTP synthase</fullName>
        <ecNumber evidence="1">6.3.4.2</ecNumber>
    </recommendedName>
    <alternativeName>
        <fullName evidence="1">Cytidine 5'-triphosphate synthase</fullName>
    </alternativeName>
    <alternativeName>
        <fullName evidence="1">Cytidine triphosphate synthetase</fullName>
        <shortName evidence="1">CTP synthetase</shortName>
        <shortName evidence="1">CTPS</shortName>
    </alternativeName>
    <alternativeName>
        <fullName evidence="1">UTP--ammonia ligase</fullName>
    </alternativeName>
</protein>
<name>PYRG_SYNJB</name>
<evidence type="ECO:0000255" key="1">
    <source>
        <dbReference type="HAMAP-Rule" id="MF_01227"/>
    </source>
</evidence>
<dbReference type="EC" id="6.3.4.2" evidence="1"/>
<dbReference type="EMBL" id="CP000240">
    <property type="protein sequence ID" value="ABD02444.1"/>
    <property type="molecule type" value="Genomic_DNA"/>
</dbReference>
<dbReference type="RefSeq" id="WP_011433092.1">
    <property type="nucleotide sequence ID" value="NC_007776.1"/>
</dbReference>
<dbReference type="SMR" id="Q2JLG7"/>
<dbReference type="STRING" id="321332.CYB_1478"/>
<dbReference type="KEGG" id="cyb:CYB_1478"/>
<dbReference type="eggNOG" id="COG0504">
    <property type="taxonomic scope" value="Bacteria"/>
</dbReference>
<dbReference type="HOGENOM" id="CLU_011675_5_0_3"/>
<dbReference type="OrthoDB" id="9801107at2"/>
<dbReference type="UniPathway" id="UPA00159">
    <property type="reaction ID" value="UER00277"/>
</dbReference>
<dbReference type="Proteomes" id="UP000001938">
    <property type="component" value="Chromosome"/>
</dbReference>
<dbReference type="GO" id="GO:0005829">
    <property type="term" value="C:cytosol"/>
    <property type="evidence" value="ECO:0007669"/>
    <property type="project" value="TreeGrafter"/>
</dbReference>
<dbReference type="GO" id="GO:0005524">
    <property type="term" value="F:ATP binding"/>
    <property type="evidence" value="ECO:0007669"/>
    <property type="project" value="UniProtKB-KW"/>
</dbReference>
<dbReference type="GO" id="GO:0003883">
    <property type="term" value="F:CTP synthase activity"/>
    <property type="evidence" value="ECO:0007669"/>
    <property type="project" value="UniProtKB-UniRule"/>
</dbReference>
<dbReference type="GO" id="GO:0004359">
    <property type="term" value="F:glutaminase activity"/>
    <property type="evidence" value="ECO:0007669"/>
    <property type="project" value="RHEA"/>
</dbReference>
<dbReference type="GO" id="GO:0042802">
    <property type="term" value="F:identical protein binding"/>
    <property type="evidence" value="ECO:0007669"/>
    <property type="project" value="TreeGrafter"/>
</dbReference>
<dbReference type="GO" id="GO:0046872">
    <property type="term" value="F:metal ion binding"/>
    <property type="evidence" value="ECO:0007669"/>
    <property type="project" value="UniProtKB-KW"/>
</dbReference>
<dbReference type="GO" id="GO:0044210">
    <property type="term" value="P:'de novo' CTP biosynthetic process"/>
    <property type="evidence" value="ECO:0007669"/>
    <property type="project" value="UniProtKB-UniRule"/>
</dbReference>
<dbReference type="GO" id="GO:0019856">
    <property type="term" value="P:pyrimidine nucleobase biosynthetic process"/>
    <property type="evidence" value="ECO:0007669"/>
    <property type="project" value="TreeGrafter"/>
</dbReference>
<dbReference type="CDD" id="cd03113">
    <property type="entry name" value="CTPS_N"/>
    <property type="match status" value="1"/>
</dbReference>
<dbReference type="CDD" id="cd01746">
    <property type="entry name" value="GATase1_CTP_Synthase"/>
    <property type="match status" value="1"/>
</dbReference>
<dbReference type="FunFam" id="3.40.50.300:FF:000009">
    <property type="entry name" value="CTP synthase"/>
    <property type="match status" value="1"/>
</dbReference>
<dbReference type="FunFam" id="3.40.50.880:FF:000002">
    <property type="entry name" value="CTP synthase"/>
    <property type="match status" value="1"/>
</dbReference>
<dbReference type="Gene3D" id="3.40.50.880">
    <property type="match status" value="1"/>
</dbReference>
<dbReference type="Gene3D" id="3.40.50.300">
    <property type="entry name" value="P-loop containing nucleotide triphosphate hydrolases"/>
    <property type="match status" value="1"/>
</dbReference>
<dbReference type="HAMAP" id="MF_01227">
    <property type="entry name" value="PyrG"/>
    <property type="match status" value="1"/>
</dbReference>
<dbReference type="InterPro" id="IPR029062">
    <property type="entry name" value="Class_I_gatase-like"/>
</dbReference>
<dbReference type="InterPro" id="IPR004468">
    <property type="entry name" value="CTP_synthase"/>
</dbReference>
<dbReference type="InterPro" id="IPR017456">
    <property type="entry name" value="CTP_synthase_N"/>
</dbReference>
<dbReference type="InterPro" id="IPR017926">
    <property type="entry name" value="GATASE"/>
</dbReference>
<dbReference type="InterPro" id="IPR033828">
    <property type="entry name" value="GATase1_CTP_Synthase"/>
</dbReference>
<dbReference type="InterPro" id="IPR027417">
    <property type="entry name" value="P-loop_NTPase"/>
</dbReference>
<dbReference type="NCBIfam" id="NF003792">
    <property type="entry name" value="PRK05380.1"/>
    <property type="match status" value="1"/>
</dbReference>
<dbReference type="NCBIfam" id="TIGR00337">
    <property type="entry name" value="PyrG"/>
    <property type="match status" value="1"/>
</dbReference>
<dbReference type="PANTHER" id="PTHR11550">
    <property type="entry name" value="CTP SYNTHASE"/>
    <property type="match status" value="1"/>
</dbReference>
<dbReference type="PANTHER" id="PTHR11550:SF0">
    <property type="entry name" value="CTP SYNTHASE-RELATED"/>
    <property type="match status" value="1"/>
</dbReference>
<dbReference type="Pfam" id="PF06418">
    <property type="entry name" value="CTP_synth_N"/>
    <property type="match status" value="1"/>
</dbReference>
<dbReference type="Pfam" id="PF00117">
    <property type="entry name" value="GATase"/>
    <property type="match status" value="1"/>
</dbReference>
<dbReference type="SUPFAM" id="SSF52317">
    <property type="entry name" value="Class I glutamine amidotransferase-like"/>
    <property type="match status" value="1"/>
</dbReference>
<dbReference type="SUPFAM" id="SSF52540">
    <property type="entry name" value="P-loop containing nucleoside triphosphate hydrolases"/>
    <property type="match status" value="1"/>
</dbReference>
<dbReference type="PROSITE" id="PS51273">
    <property type="entry name" value="GATASE_TYPE_1"/>
    <property type="match status" value="1"/>
</dbReference>
<keyword id="KW-0067">ATP-binding</keyword>
<keyword id="KW-0315">Glutamine amidotransferase</keyword>
<keyword id="KW-0436">Ligase</keyword>
<keyword id="KW-0460">Magnesium</keyword>
<keyword id="KW-0479">Metal-binding</keyword>
<keyword id="KW-0547">Nucleotide-binding</keyword>
<keyword id="KW-0665">Pyrimidine biosynthesis</keyword>
<keyword id="KW-1185">Reference proteome</keyword>